<keyword id="KW-0051">Antiviral defense</keyword>
<keyword id="KW-0963">Cytoplasm</keyword>
<keyword id="KW-1185">Reference proteome</keyword>
<reference key="1">
    <citation type="journal article" date="2001" name="Proc. Natl. Acad. Sci. U.S.A.">
        <title>The complete genome of the crenarchaeon Sulfolobus solfataricus P2.</title>
        <authorList>
            <person name="She Q."/>
            <person name="Singh R.K."/>
            <person name="Confalonieri F."/>
            <person name="Zivanovic Y."/>
            <person name="Allard G."/>
            <person name="Awayez M.J."/>
            <person name="Chan-Weiher C.C.-Y."/>
            <person name="Clausen I.G."/>
            <person name="Curtis B.A."/>
            <person name="De Moors A."/>
            <person name="Erauso G."/>
            <person name="Fletcher C."/>
            <person name="Gordon P.M.K."/>
            <person name="Heikamp-de Jong I."/>
            <person name="Jeffries A.C."/>
            <person name="Kozera C.J."/>
            <person name="Medina N."/>
            <person name="Peng X."/>
            <person name="Thi-Ngoc H.P."/>
            <person name="Redder P."/>
            <person name="Schenk M.E."/>
            <person name="Theriault C."/>
            <person name="Tolstrup N."/>
            <person name="Charlebois R.L."/>
            <person name="Doolittle W.F."/>
            <person name="Duguet M."/>
            <person name="Gaasterland T."/>
            <person name="Garrett R.A."/>
            <person name="Ragan M.A."/>
            <person name="Sensen C.W."/>
            <person name="Van der Oost J."/>
        </authorList>
    </citation>
    <scope>NUCLEOTIDE SEQUENCE [LARGE SCALE GENOMIC DNA]</scope>
    <source>
        <strain>ATCC 35092 / DSM 1617 / JCM 11322 / P2</strain>
    </source>
</reference>
<reference key="2">
    <citation type="journal article" date="2012" name="Mol. Cell">
        <title>Structure and mechanism of the CMR complex for CRISPR-mediated antiviral immunity.</title>
        <authorList>
            <person name="Zhang J."/>
            <person name="Rouillon C."/>
            <person name="Kerou M."/>
            <person name="Reeks J."/>
            <person name="Brugger K."/>
            <person name="Graham S."/>
            <person name="Reimann J."/>
            <person name="Cannone G."/>
            <person name="Liu H."/>
            <person name="Albers S.V."/>
            <person name="Naismith J.H."/>
            <person name="Spagnolo L."/>
            <person name="White M.F."/>
        </authorList>
    </citation>
    <scope>IDENTIFICATION BY MASS SPECTROMETRY</scope>
    <scope>FUNCTION IN CMR COMPLEX</scope>
    <scope>SUBUNIT</scope>
    <scope>SUBCELLULAR LOCATION</scope>
    <source>
        <strain>ATCC 35092 / DSM 1617 / JCM 11322 / P2</strain>
    </source>
</reference>
<comment type="function">
    <text evidence="1 2">CRISPR (clustered regularly interspaced short palindromic repeat) is an adaptive immune system that provides protection against mobile genetic elements (viruses, transposable elements and conjugative plasmids). CRISPR clusters contain spacers, sequences complementary to antecedent mobile elements, and target invading nucleic acids. CRISPR clusters are transcribed and processed into CRISPR RNA (crRNA) (By similarity). The CMR complex degrades RNA complementary to the crRNA (target RNA) within UA dinucleotides, generating 3'-OH and 5'-phosphate ends. Activity is dependent on the 8 nt long 5' tag in the crRNA, an unpaired 3' flag on the target RNA, and is stimulated by ATP. Some cleavage of the guide crRNA can also be observed.</text>
</comment>
<comment type="subunit">
    <text evidence="2">Part of the CMR ribonucleoprotein complex, consisting of crRNA plus Cmr1/Cmr2/Cmr3/Cmr4/Cmr5/Cmr6 at 1:1 and possibly 3 Cmr7 dimers. A Cmr2/Cmr3/Cmr7 subcomplex without crRNA can also be isolated. It does not cleave target RNA.</text>
</comment>
<comment type="subcellular location">
    <subcellularLocation>
        <location evidence="2">Cytoplasm</location>
    </subcellularLocation>
</comment>
<comment type="similarity">
    <text evidence="3">Belongs to the CRISPR system Cmr4 family.</text>
</comment>
<proteinExistence type="evidence at protein level"/>
<feature type="chain" id="PRO_0000418078" description="CRISPR system CMR subunit Cmr4">
    <location>
        <begin position="1"/>
        <end position="308"/>
    </location>
</feature>
<organism>
    <name type="scientific">Saccharolobus solfataricus (strain ATCC 35092 / DSM 1617 / JCM 11322 / P2)</name>
    <name type="common">Sulfolobus solfataricus</name>
    <dbReference type="NCBI Taxonomy" id="273057"/>
    <lineage>
        <taxon>Archaea</taxon>
        <taxon>Thermoproteota</taxon>
        <taxon>Thermoprotei</taxon>
        <taxon>Sulfolobales</taxon>
        <taxon>Sulfolobaceae</taxon>
        <taxon>Saccharolobus</taxon>
    </lineage>
</organism>
<evidence type="ECO:0000250" key="1"/>
<evidence type="ECO:0000269" key="2">
    <source>
    </source>
</evidence>
<evidence type="ECO:0000305" key="3"/>
<protein>
    <recommendedName>
        <fullName>CRISPR system CMR subunit Cmr4</fullName>
    </recommendedName>
    <alternativeName>
        <fullName>CRISPR type III-B/RAMP module RAMP protein Cmr4</fullName>
    </alternativeName>
</protein>
<sequence>MIIMTYYTFVKPFFIKAVTHLHVSSGTSVEEEVDLPFQRDELNYPTIFASSLKGAIKSFLLKEYSNAREIIYKVLGSDENPDEASLGSFLDAVLFAIPARSIGVSGLDEAWVYVTTYELLRKVKSLLESMNTLSATQFTSLLDAINNILQESKNLIISDNAASVILNEDFYVELSNIQNEYIQSLLGDMLIENSTYNQSNQNSQSQGNHLVKPLIVLKDSIGREVINRSLIRVRRIKIKRSSKTVEEGGLWSEEYVPVNSLFFSSFLARGSKDTAYFADCILRKTRYLILGGKETIGKGIVELRWLND</sequence>
<name>CMR4_SACS2</name>
<accession>Q97WX4</accession>
<gene>
    <name type="primary">cmr4</name>
    <name type="ordered locus">SSO1987</name>
</gene>
<dbReference type="EMBL" id="AE006641">
    <property type="protein sequence ID" value="AAK42177.1"/>
    <property type="molecule type" value="Genomic_DNA"/>
</dbReference>
<dbReference type="PIR" id="B90365">
    <property type="entry name" value="B90365"/>
</dbReference>
<dbReference type="SMR" id="Q97WX4"/>
<dbReference type="STRING" id="273057.SSO1987"/>
<dbReference type="PaxDb" id="273057-SSO1987"/>
<dbReference type="EnsemblBacteria" id="AAK42177">
    <property type="protein sequence ID" value="AAK42177"/>
    <property type="gene ID" value="SSO1987"/>
</dbReference>
<dbReference type="KEGG" id="sso:SSO1987"/>
<dbReference type="PATRIC" id="fig|273057.12.peg.2063"/>
<dbReference type="eggNOG" id="arCOG02657">
    <property type="taxonomic scope" value="Archaea"/>
</dbReference>
<dbReference type="HOGENOM" id="CLU_047795_0_0_2"/>
<dbReference type="InParanoid" id="Q97WX4"/>
<dbReference type="PhylomeDB" id="Q97WX4"/>
<dbReference type="Proteomes" id="UP000001974">
    <property type="component" value="Chromosome"/>
</dbReference>
<dbReference type="GO" id="GO:0005737">
    <property type="term" value="C:cytoplasm"/>
    <property type="evidence" value="ECO:0007669"/>
    <property type="project" value="UniProtKB-SubCell"/>
</dbReference>
<dbReference type="GO" id="GO:0051607">
    <property type="term" value="P:defense response to virus"/>
    <property type="evidence" value="ECO:0007669"/>
    <property type="project" value="UniProtKB-KW"/>
</dbReference>
<dbReference type="InterPro" id="IPR013410">
    <property type="entry name" value="CRISPR-assoc_RAMP_Cmr4"/>
</dbReference>
<dbReference type="InterPro" id="IPR005537">
    <property type="entry name" value="RAMP_III_fam"/>
</dbReference>
<dbReference type="NCBIfam" id="TIGR02580">
    <property type="entry name" value="cas_RAMP_Cmr4"/>
    <property type="match status" value="1"/>
</dbReference>
<dbReference type="PANTHER" id="PTHR36700">
    <property type="entry name" value="CRISPR SYSTEM CMR SUBUNIT CMR4"/>
    <property type="match status" value="1"/>
</dbReference>
<dbReference type="PANTHER" id="PTHR36700:SF1">
    <property type="entry name" value="CRISPR SYSTEM CMR SUBUNIT CMR4"/>
    <property type="match status" value="1"/>
</dbReference>
<dbReference type="Pfam" id="PF03787">
    <property type="entry name" value="RAMPs"/>
    <property type="match status" value="1"/>
</dbReference>